<gene>
    <name evidence="2" type="primary">HOMER1</name>
</gene>
<sequence length="354" mass="40370">MGEQPIFSTRAHVFQIDPNTKKNWVPTSKHAVTVSYFYDSTRNVYRIISLDGSKAIINSTITPNMTFTKTSQKFGQWADSRANTVYGLGFSSEHHLSKFAEKFQEFKEAARLAKEKSQEKMELTSTPSQESAGGDLQSPLTPESINGTDDERTPDLTQNSEPRPEPTQNALPFTHSSAISKHWEAELATLKGNNAKLTAALLESTANVKQWKQQLAAYQEEAERLHKRVTELECVSSQANAVHTHKTELNQTIQELEETLKVKEEEIERLKQEIDNARELQEQRDSLTQKLQEVEIRNKDLEGQLSDLEQRLEKSQNEQEAFRNNLKTLLEILDGKIFELTELRDNLAKLLERS</sequence>
<organism>
    <name type="scientific">Bos taurus</name>
    <name type="common">Bovine</name>
    <dbReference type="NCBI Taxonomy" id="9913"/>
    <lineage>
        <taxon>Eukaryota</taxon>
        <taxon>Metazoa</taxon>
        <taxon>Chordata</taxon>
        <taxon>Craniata</taxon>
        <taxon>Vertebrata</taxon>
        <taxon>Euteleostomi</taxon>
        <taxon>Mammalia</taxon>
        <taxon>Eutheria</taxon>
        <taxon>Laurasiatheria</taxon>
        <taxon>Artiodactyla</taxon>
        <taxon>Ruminantia</taxon>
        <taxon>Pecora</taxon>
        <taxon>Bovidae</taxon>
        <taxon>Bovinae</taxon>
        <taxon>Bos</taxon>
    </lineage>
</organism>
<reference key="1">
    <citation type="submission" date="2005-09" db="EMBL/GenBank/DDBJ databases">
        <authorList>
            <consortium name="NIH - Mammalian Gene Collection (MGC) project"/>
        </authorList>
    </citation>
    <scope>NUCLEOTIDE SEQUENCE [LARGE SCALE MRNA]</scope>
    <source>
        <strain>Hereford</strain>
        <tissue>Ascending colon</tissue>
    </source>
</reference>
<accession>Q2KJ56</accession>
<dbReference type="EMBL" id="BC105509">
    <property type="protein sequence ID" value="AAI05510.1"/>
    <property type="molecule type" value="mRNA"/>
</dbReference>
<dbReference type="RefSeq" id="NP_001069520.1">
    <property type="nucleotide sequence ID" value="NM_001076052.1"/>
</dbReference>
<dbReference type="BMRB" id="Q2KJ56"/>
<dbReference type="SMR" id="Q2KJ56"/>
<dbReference type="FunCoup" id="Q2KJ56">
    <property type="interactions" value="893"/>
</dbReference>
<dbReference type="STRING" id="9913.ENSBTAP00000017647"/>
<dbReference type="PaxDb" id="9913-ENSBTAP00000017647"/>
<dbReference type="GeneID" id="535311"/>
<dbReference type="KEGG" id="bta:535311"/>
<dbReference type="CTD" id="9456"/>
<dbReference type="VEuPathDB" id="HostDB:ENSBTAG00000025853"/>
<dbReference type="eggNOG" id="ENOG502QR3K">
    <property type="taxonomic scope" value="Eukaryota"/>
</dbReference>
<dbReference type="HOGENOM" id="CLU_033940_0_0_1"/>
<dbReference type="InParanoid" id="Q2KJ56"/>
<dbReference type="OMA" id="QXSAISK"/>
<dbReference type="OrthoDB" id="9983798at2759"/>
<dbReference type="TreeFam" id="TF325627"/>
<dbReference type="Reactome" id="R-BTA-6794361">
    <property type="pathway name" value="Neurexins and neuroligins"/>
</dbReference>
<dbReference type="Proteomes" id="UP000009136">
    <property type="component" value="Chromosome 10"/>
</dbReference>
<dbReference type="Bgee" id="ENSBTAG00000025853">
    <property type="expression patterns" value="Expressed in occipital lobe and 106 other cell types or tissues"/>
</dbReference>
<dbReference type="GO" id="GO:0005737">
    <property type="term" value="C:cytoplasm"/>
    <property type="evidence" value="ECO:0000318"/>
    <property type="project" value="GO_Central"/>
</dbReference>
<dbReference type="GO" id="GO:0030425">
    <property type="term" value="C:dendrite"/>
    <property type="evidence" value="ECO:0000318"/>
    <property type="project" value="GO_Central"/>
</dbReference>
<dbReference type="GO" id="GO:0043197">
    <property type="term" value="C:dendritic spine"/>
    <property type="evidence" value="ECO:0007669"/>
    <property type="project" value="UniProtKB-SubCell"/>
</dbReference>
<dbReference type="GO" id="GO:0044309">
    <property type="term" value="C:neuron spine"/>
    <property type="evidence" value="ECO:0000250"/>
    <property type="project" value="UniProtKB"/>
</dbReference>
<dbReference type="GO" id="GO:0005886">
    <property type="term" value="C:plasma membrane"/>
    <property type="evidence" value="ECO:0000318"/>
    <property type="project" value="GO_Central"/>
</dbReference>
<dbReference type="GO" id="GO:0014069">
    <property type="term" value="C:postsynaptic density"/>
    <property type="evidence" value="ECO:0000318"/>
    <property type="project" value="GO_Central"/>
</dbReference>
<dbReference type="GO" id="GO:0035256">
    <property type="term" value="F:G protein-coupled glutamate receptor binding"/>
    <property type="evidence" value="ECO:0000318"/>
    <property type="project" value="GO_Central"/>
</dbReference>
<dbReference type="GO" id="GO:0007216">
    <property type="term" value="P:G protein-coupled glutamate receptor signaling pathway"/>
    <property type="evidence" value="ECO:0000318"/>
    <property type="project" value="GO_Central"/>
</dbReference>
<dbReference type="GO" id="GO:0051262">
    <property type="term" value="P:protein tetramerization"/>
    <property type="evidence" value="ECO:0000250"/>
    <property type="project" value="UniProtKB"/>
</dbReference>
<dbReference type="GO" id="GO:1902950">
    <property type="term" value="P:regulation of dendritic spine maintenance"/>
    <property type="evidence" value="ECO:0000250"/>
    <property type="project" value="UniProtKB"/>
</dbReference>
<dbReference type="GO" id="GO:2001256">
    <property type="term" value="P:regulation of store-operated calcium entry"/>
    <property type="evidence" value="ECO:0000318"/>
    <property type="project" value="GO_Central"/>
</dbReference>
<dbReference type="GO" id="GO:0051966">
    <property type="term" value="P:regulation of synaptic transmission, glutamatergic"/>
    <property type="evidence" value="ECO:0000250"/>
    <property type="project" value="UniProtKB"/>
</dbReference>
<dbReference type="CDD" id="cd01206">
    <property type="entry name" value="EVH1_Homer_Vesl"/>
    <property type="match status" value="1"/>
</dbReference>
<dbReference type="FunFam" id="1.20.5.1700:FF:000003">
    <property type="entry name" value="Homer homolog 1 (Drosophila)"/>
    <property type="match status" value="1"/>
</dbReference>
<dbReference type="FunFam" id="2.30.29.30:FF:000014">
    <property type="entry name" value="Homer homolog 1 (Drosophila)"/>
    <property type="match status" value="1"/>
</dbReference>
<dbReference type="Gene3D" id="1.20.5.1700">
    <property type="match status" value="1"/>
</dbReference>
<dbReference type="Gene3D" id="2.30.29.30">
    <property type="entry name" value="Pleckstrin-homology domain (PH domain)/Phosphotyrosine-binding domain (PTB)"/>
    <property type="match status" value="1"/>
</dbReference>
<dbReference type="InterPro" id="IPR045027">
    <property type="entry name" value="Homer"/>
</dbReference>
<dbReference type="InterPro" id="IPR044100">
    <property type="entry name" value="Homer_EVH1"/>
</dbReference>
<dbReference type="InterPro" id="IPR011993">
    <property type="entry name" value="PH-like_dom_sf"/>
</dbReference>
<dbReference type="InterPro" id="IPR000697">
    <property type="entry name" value="WH1/EVH1_dom"/>
</dbReference>
<dbReference type="PANTHER" id="PTHR10918">
    <property type="entry name" value="HOMER"/>
    <property type="match status" value="1"/>
</dbReference>
<dbReference type="Pfam" id="PF00568">
    <property type="entry name" value="WH1"/>
    <property type="match status" value="1"/>
</dbReference>
<dbReference type="SMART" id="SM00461">
    <property type="entry name" value="WH1"/>
    <property type="match status" value="1"/>
</dbReference>
<dbReference type="SUPFAM" id="SSF50729">
    <property type="entry name" value="PH domain-like"/>
    <property type="match status" value="1"/>
</dbReference>
<dbReference type="SUPFAM" id="SSF57997">
    <property type="entry name" value="Tropomyosin"/>
    <property type="match status" value="1"/>
</dbReference>
<dbReference type="PROSITE" id="PS50229">
    <property type="entry name" value="WH1"/>
    <property type="match status" value="1"/>
</dbReference>
<proteinExistence type="evidence at transcript level"/>
<keyword id="KW-0007">Acetylation</keyword>
<keyword id="KW-0966">Cell projection</keyword>
<keyword id="KW-0175">Coiled coil</keyword>
<keyword id="KW-0963">Cytoplasm</keyword>
<keyword id="KW-0597">Phosphoprotein</keyword>
<keyword id="KW-1185">Reference proteome</keyword>
<keyword id="KW-0770">Synapse</keyword>
<evidence type="ECO:0000250" key="1"/>
<evidence type="ECO:0000250" key="2">
    <source>
        <dbReference type="UniProtKB" id="Q86YM7"/>
    </source>
</evidence>
<evidence type="ECO:0000250" key="3">
    <source>
        <dbReference type="UniProtKB" id="Q9Z214"/>
    </source>
</evidence>
<evidence type="ECO:0000250" key="4">
    <source>
        <dbReference type="UniProtKB" id="Q9Z2Y3"/>
    </source>
</evidence>
<evidence type="ECO:0000255" key="5"/>
<evidence type="ECO:0000255" key="6">
    <source>
        <dbReference type="PROSITE-ProRule" id="PRU00410"/>
    </source>
</evidence>
<evidence type="ECO:0000256" key="7">
    <source>
        <dbReference type="SAM" id="MobiDB-lite"/>
    </source>
</evidence>
<evidence type="ECO:0000305" key="8"/>
<feature type="initiator methionine" description="Removed" evidence="2">
    <location>
        <position position="1"/>
    </location>
</feature>
<feature type="chain" id="PRO_0000284055" description="Homer protein homolog 1">
    <location>
        <begin position="2"/>
        <end position="354"/>
    </location>
</feature>
<feature type="domain" description="WH1" evidence="6">
    <location>
        <begin position="1"/>
        <end position="110"/>
    </location>
</feature>
<feature type="region of interest" description="Disordered" evidence="7">
    <location>
        <begin position="114"/>
        <end position="172"/>
    </location>
</feature>
<feature type="region of interest" description="Required for tetramerization" evidence="3">
    <location>
        <begin position="290"/>
        <end position="354"/>
    </location>
</feature>
<feature type="coiled-coil region" evidence="5">
    <location>
        <begin position="181"/>
        <end position="352"/>
    </location>
</feature>
<feature type="compositionally biased region" description="Polar residues" evidence="7">
    <location>
        <begin position="138"/>
        <end position="147"/>
    </location>
</feature>
<feature type="compositionally biased region" description="Polar residues" evidence="7">
    <location>
        <begin position="155"/>
        <end position="172"/>
    </location>
</feature>
<feature type="modified residue" description="N-acetylglycine" evidence="2">
    <location>
        <position position="2"/>
    </location>
</feature>
<feature type="modified residue" description="Phosphoserine" evidence="4">
    <location>
        <position position="306"/>
    </location>
</feature>
<comment type="function">
    <text evidence="1 2 3">Postsynaptic density scaffolding protein. Binds and cross-links cytoplasmic regions of GRM1, GRM5, ITPR1, DNM3, RYR1, RYR2, SHANK1 and SHANK3. By physically linking GRM1 and GRM5 with ER-associated ITPR1 receptors, it aids the coupling of surface receptors to intracellular calcium release. May also couple GRM1 to PI3 kinase through its interaction with AGAP2 (By similarity). Forms a high-order complex with SHANK1, which in turn is necessary for the structural and functional integrity of dendritic spines (By similarity). Negatively regulates T cell activation by inhibiting the calcineurin-NFAT pathway. Acts by competing with calcineurin/PPP3CA for NFAT protein binding, hence preventing NFAT activation by PPP3CA (By similarity).</text>
</comment>
<comment type="subunit">
    <text evidence="2 3 4">Tetramer; this tetrameric structure is critical for forming the high-order complex with SHANK1, which in turn is necessary for the structural and functional integrity of dendritic spines (By similarity). Interacts with GRM1, GRM5, ITPR1, DNM3, RYR1, RYR2 and SHANK3. Interacts with IFT57 and OPHN1. Encodes a coiled-coil structure that mediates homo- and heteromultimerization (By similarity). Interacts with SHANK1; forms high-order polymerized complex with a mesh-like network structure, at least composed of SHANK1, HOMER1 and DLGAP1; the complex formation is SHANK1 multimerization dependent (By similarity). Interacts with NFATC4 (By similarity). Interacts with DAGLA (via PPXXF motif); this interaction is required for the cell membrane localization of DAGLA (By similarity). Interacts with SRGAP2 (By similarity).</text>
</comment>
<comment type="subcellular location">
    <subcellularLocation>
        <location evidence="1">Cytoplasm</location>
    </subcellularLocation>
    <subcellularLocation>
        <location evidence="1">Postsynaptic density</location>
    </subcellularLocation>
    <subcellularLocation>
        <location evidence="1">Synapse</location>
    </subcellularLocation>
    <subcellularLocation>
        <location evidence="3">Cell projection</location>
        <location evidence="3">Dendritic spine</location>
    </subcellularLocation>
</comment>
<comment type="domain">
    <text evidence="1 3">The WH1 domain interacts with the PPXXF motif in GRM1, GRM5, RYR1, RYR2, ITPR1, SHANK 1 and SHANK3. The coiled-Coil domain forms an antiparallel tetrameric arrangement (By similarity).</text>
</comment>
<comment type="similarity">
    <text evidence="8">Belongs to the Homer family.</text>
</comment>
<protein>
    <recommendedName>
        <fullName evidence="2">Homer protein homolog 1</fullName>
        <shortName>Homer-1</shortName>
    </recommendedName>
</protein>
<name>HOME1_BOVIN</name>